<dbReference type="EMBL" id="BX251410">
    <property type="protein sequence ID" value="CAD66834.1"/>
    <property type="molecule type" value="Genomic_DNA"/>
</dbReference>
<dbReference type="RefSeq" id="WP_011096115.1">
    <property type="nucleotide sequence ID" value="NC_004551.1"/>
</dbReference>
<dbReference type="SMR" id="Q83IA3"/>
<dbReference type="GeneID" id="67387928"/>
<dbReference type="KEGG" id="tws:TW154"/>
<dbReference type="HOGENOM" id="CLU_046483_2_0_11"/>
<dbReference type="GO" id="GO:0005737">
    <property type="term" value="C:cytoplasm"/>
    <property type="evidence" value="ECO:0007669"/>
    <property type="project" value="UniProtKB-ARBA"/>
</dbReference>
<dbReference type="GO" id="GO:0015935">
    <property type="term" value="C:small ribosomal subunit"/>
    <property type="evidence" value="ECO:0007669"/>
    <property type="project" value="TreeGrafter"/>
</dbReference>
<dbReference type="GO" id="GO:0003723">
    <property type="term" value="F:RNA binding"/>
    <property type="evidence" value="ECO:0007669"/>
    <property type="project" value="TreeGrafter"/>
</dbReference>
<dbReference type="GO" id="GO:0003735">
    <property type="term" value="F:structural constituent of ribosome"/>
    <property type="evidence" value="ECO:0007669"/>
    <property type="project" value="InterPro"/>
</dbReference>
<dbReference type="GO" id="GO:0006412">
    <property type="term" value="P:translation"/>
    <property type="evidence" value="ECO:0007669"/>
    <property type="project" value="UniProtKB-UniRule"/>
</dbReference>
<dbReference type="FunFam" id="3.30.230.10:FF:000001">
    <property type="entry name" value="30S ribosomal protein S9"/>
    <property type="match status" value="1"/>
</dbReference>
<dbReference type="Gene3D" id="3.30.230.10">
    <property type="match status" value="1"/>
</dbReference>
<dbReference type="HAMAP" id="MF_00532_B">
    <property type="entry name" value="Ribosomal_uS9_B"/>
    <property type="match status" value="1"/>
</dbReference>
<dbReference type="InterPro" id="IPR020568">
    <property type="entry name" value="Ribosomal_Su5_D2-typ_SF"/>
</dbReference>
<dbReference type="InterPro" id="IPR000754">
    <property type="entry name" value="Ribosomal_uS9"/>
</dbReference>
<dbReference type="InterPro" id="IPR023035">
    <property type="entry name" value="Ribosomal_uS9_bac/plastid"/>
</dbReference>
<dbReference type="InterPro" id="IPR020574">
    <property type="entry name" value="Ribosomal_uS9_CS"/>
</dbReference>
<dbReference type="InterPro" id="IPR014721">
    <property type="entry name" value="Ribsml_uS5_D2-typ_fold_subgr"/>
</dbReference>
<dbReference type="NCBIfam" id="NF001099">
    <property type="entry name" value="PRK00132.1"/>
    <property type="match status" value="1"/>
</dbReference>
<dbReference type="PANTHER" id="PTHR21569">
    <property type="entry name" value="RIBOSOMAL PROTEIN S9"/>
    <property type="match status" value="1"/>
</dbReference>
<dbReference type="PANTHER" id="PTHR21569:SF1">
    <property type="entry name" value="SMALL RIBOSOMAL SUBUNIT PROTEIN US9M"/>
    <property type="match status" value="1"/>
</dbReference>
<dbReference type="Pfam" id="PF00380">
    <property type="entry name" value="Ribosomal_S9"/>
    <property type="match status" value="1"/>
</dbReference>
<dbReference type="SUPFAM" id="SSF54211">
    <property type="entry name" value="Ribosomal protein S5 domain 2-like"/>
    <property type="match status" value="1"/>
</dbReference>
<dbReference type="PROSITE" id="PS00360">
    <property type="entry name" value="RIBOSOMAL_S9"/>
    <property type="match status" value="1"/>
</dbReference>
<sequence>MVPPQRAKNDTSSAPDSAAETRGPLVSSGSGLGRRKSATARVYLSPGEGVFVVNGRDINEYFTSKLHRQFACQPLKILDLLGSYDVKVTLHGGGASGQAGAVRLGIARALNTIDPENNRKPLKSAGFLTRDSRVKERKKAGLKKARKAPQYSKR</sequence>
<reference key="1">
    <citation type="journal article" date="2003" name="Lancet">
        <title>Sequencing and analysis of the genome of the Whipple's disease bacterium Tropheryma whipplei.</title>
        <authorList>
            <person name="Bentley S.D."/>
            <person name="Maiwald M."/>
            <person name="Murphy L.D."/>
            <person name="Pallen M.J."/>
            <person name="Yeats C.A."/>
            <person name="Dover L.G."/>
            <person name="Norbertczak H.T."/>
            <person name="Besra G.S."/>
            <person name="Quail M.A."/>
            <person name="Harris D.E."/>
            <person name="von Herbay A."/>
            <person name="Goble A."/>
            <person name="Rutter S."/>
            <person name="Squares R."/>
            <person name="Squares S."/>
            <person name="Barrell B.G."/>
            <person name="Parkhill J."/>
            <person name="Relman D.A."/>
        </authorList>
    </citation>
    <scope>NUCLEOTIDE SEQUENCE [LARGE SCALE GENOMIC DNA]</scope>
    <source>
        <strain>TW08/27</strain>
    </source>
</reference>
<gene>
    <name evidence="1" type="primary">rpsI</name>
    <name type="ordered locus">TW154</name>
</gene>
<accession>Q83IA3</accession>
<name>RS9_TROW8</name>
<feature type="chain" id="PRO_0000111434" description="Small ribosomal subunit protein uS9">
    <location>
        <begin position="1"/>
        <end position="154"/>
    </location>
</feature>
<feature type="region of interest" description="Disordered" evidence="2">
    <location>
        <begin position="1"/>
        <end position="33"/>
    </location>
</feature>
<feature type="region of interest" description="Disordered" evidence="2">
    <location>
        <begin position="115"/>
        <end position="154"/>
    </location>
</feature>
<feature type="compositionally biased region" description="Basic residues" evidence="2">
    <location>
        <begin position="135"/>
        <end position="154"/>
    </location>
</feature>
<protein>
    <recommendedName>
        <fullName evidence="1">Small ribosomal subunit protein uS9</fullName>
    </recommendedName>
    <alternativeName>
        <fullName evidence="3">30S ribosomal protein S9</fullName>
    </alternativeName>
</protein>
<proteinExistence type="inferred from homology"/>
<comment type="similarity">
    <text evidence="1">Belongs to the universal ribosomal protein uS9 family.</text>
</comment>
<evidence type="ECO:0000255" key="1">
    <source>
        <dbReference type="HAMAP-Rule" id="MF_00532"/>
    </source>
</evidence>
<evidence type="ECO:0000256" key="2">
    <source>
        <dbReference type="SAM" id="MobiDB-lite"/>
    </source>
</evidence>
<evidence type="ECO:0000305" key="3"/>
<keyword id="KW-0687">Ribonucleoprotein</keyword>
<keyword id="KW-0689">Ribosomal protein</keyword>
<organism>
    <name type="scientific">Tropheryma whipplei (strain TW08/27)</name>
    <name type="common">Whipple's bacillus</name>
    <dbReference type="NCBI Taxonomy" id="218496"/>
    <lineage>
        <taxon>Bacteria</taxon>
        <taxon>Bacillati</taxon>
        <taxon>Actinomycetota</taxon>
        <taxon>Actinomycetes</taxon>
        <taxon>Micrococcales</taxon>
        <taxon>Tropherymataceae</taxon>
        <taxon>Tropheryma</taxon>
    </lineage>
</organism>